<sequence>LHDPCDNTEDCEDGLECNRNKCLIPYDSDKTCETGWDCVHGVWCSSFPGGSPGCRMDYRCKNEQCEDPATECVDEICGRKEGERCIGPCKAGLTCRNGYCRKPW</sequence>
<reference key="1">
    <citation type="journal article" date="2006" name="J. Mol. Evol.">
        <title>Genes expressed in a turrid venom duct: divergence and similarity to conotoxins.</title>
        <authorList>
            <person name="Watkins M."/>
            <person name="Hillyard D.R."/>
            <person name="Olivera B.M."/>
        </authorList>
    </citation>
    <scope>NUCLEOTIDE SEQUENCE [MRNA]</scope>
    <source>
        <tissue>Venom duct</tissue>
    </source>
</reference>
<proteinExistence type="evidence at transcript level"/>
<organism>
    <name type="scientific">Iotyrris cingulifera</name>
    <name type="common">Sea snail</name>
    <name type="synonym">Pleurotoma cingulifera</name>
    <dbReference type="NCBI Taxonomy" id="553733"/>
    <lineage>
        <taxon>Eukaryota</taxon>
        <taxon>Metazoa</taxon>
        <taxon>Spiralia</taxon>
        <taxon>Lophotrochozoa</taxon>
        <taxon>Mollusca</taxon>
        <taxon>Gastropoda</taxon>
        <taxon>Caenogastropoda</taxon>
        <taxon>Neogastropoda</taxon>
        <taxon>Conoidea</taxon>
        <taxon>Turridae</taxon>
        <taxon>Iotyrris</taxon>
    </lineage>
</organism>
<keyword id="KW-1015">Disulfide bond</keyword>
<keyword id="KW-0872">Ion channel impairing toxin</keyword>
<keyword id="KW-0528">Neurotoxin</keyword>
<keyword id="KW-0964">Secreted</keyword>
<keyword id="KW-0800">Toxin</keyword>
<comment type="function">
    <text evidence="1">Acts as a neurotoxin by inhibiting an ion channel.</text>
</comment>
<comment type="subcellular location">
    <subcellularLocation>
        <location evidence="1">Secreted</location>
    </subcellularLocation>
</comment>
<comment type="tissue specificity">
    <text>Expressed by the venom duct.</text>
</comment>
<comment type="domain">
    <text>The cysteine framework is C-C-C-C-C-C-C-C-C-C-C-C-C-C-C-C.</text>
</comment>
<comment type="PTM">
    <text evidence="1">Contains 8 disulfide bonds.</text>
</comment>
<feature type="chain" id="PRO_0000419859" description="Turripeptide OL55-like">
    <location>
        <begin position="1"/>
        <end position="104"/>
    </location>
</feature>
<evidence type="ECO:0000250" key="1"/>
<protein>
    <recommendedName>
        <fullName>Turripeptide OL55-like</fullName>
    </recommendedName>
</protein>
<name>TU55_IOTCI</name>
<dbReference type="SMR" id="P0DKP3"/>
<dbReference type="GO" id="GO:0005576">
    <property type="term" value="C:extracellular region"/>
    <property type="evidence" value="ECO:0007669"/>
    <property type="project" value="UniProtKB-SubCell"/>
</dbReference>
<dbReference type="GO" id="GO:0099106">
    <property type="term" value="F:ion channel regulator activity"/>
    <property type="evidence" value="ECO:0007669"/>
    <property type="project" value="UniProtKB-KW"/>
</dbReference>
<dbReference type="GO" id="GO:0090729">
    <property type="term" value="F:toxin activity"/>
    <property type="evidence" value="ECO:0007669"/>
    <property type="project" value="UniProtKB-KW"/>
</dbReference>
<accession>P0DKP3</accession>